<geneLocation type="plasmid">
    <name>TOL pDK1</name>
</geneLocation>
<geneLocation type="plasmid">
    <name>TOL pWW53</name>
</geneLocation>
<evidence type="ECO:0000255" key="1">
    <source>
        <dbReference type="PROSITE-ProRule" id="PRU00593"/>
    </source>
</evidence>
<feature type="chain" id="PRO_0000194603" description="XylDLEGF operon transcriptional activator 2">
    <location>
        <begin position="1"/>
        <end position="157"/>
    </location>
</feature>
<feature type="domain" description="HTH araC/xylS-type" evidence="1">
    <location>
        <begin position="39"/>
        <end position="140"/>
    </location>
</feature>
<feature type="DNA-binding region" description="H-T-H motif" evidence="1">
    <location>
        <begin position="56"/>
        <end position="77"/>
    </location>
</feature>
<feature type="DNA-binding region" description="H-T-H motif" evidence="1">
    <location>
        <begin position="107"/>
        <end position="130"/>
    </location>
</feature>
<sequence>MSMTLVAEHYTKIIATKLLETLSSNVSRKGFVEGNPCFERVVQFIEENVKRSISLEQLAELALMSPRSLYTMFEKHTGTTPMNYIRNRKLECVRACLSNPTTNIRSITEVALDYGFLHLGRFAEKYRSTFGELPSDTLSLHKMKCIDSRESSLSSLF</sequence>
<name>XYLS2_PSEPU</name>
<protein>
    <recommendedName>
        <fullName>XylDLEGF operon transcriptional activator 2</fullName>
    </recommendedName>
</protein>
<keyword id="KW-0010">Activator</keyword>
<keyword id="KW-0058">Aromatic hydrocarbons catabolism</keyword>
<keyword id="KW-0963">Cytoplasm</keyword>
<keyword id="KW-0238">DNA-binding</keyword>
<keyword id="KW-0614">Plasmid</keyword>
<keyword id="KW-0804">Transcription</keyword>
<keyword id="KW-0805">Transcription regulation</keyword>
<organism>
    <name type="scientific">Pseudomonas putida</name>
    <name type="common">Arthrobacter siderocapsulatus</name>
    <dbReference type="NCBI Taxonomy" id="303"/>
    <lineage>
        <taxon>Bacteria</taxon>
        <taxon>Pseudomonadati</taxon>
        <taxon>Pseudomonadota</taxon>
        <taxon>Gammaproteobacteria</taxon>
        <taxon>Pseudomonadales</taxon>
        <taxon>Pseudomonadaceae</taxon>
        <taxon>Pseudomonas</taxon>
    </lineage>
</organism>
<dbReference type="EMBL" id="L02642">
    <property type="protein sequence ID" value="AAA71889.1"/>
    <property type="molecule type" value="Unassigned_DNA"/>
</dbReference>
<dbReference type="EMBL" id="L02643">
    <property type="protein sequence ID" value="AAA71891.1"/>
    <property type="molecule type" value="Unassigned_DNA"/>
</dbReference>
<dbReference type="PIR" id="S35486">
    <property type="entry name" value="S35486"/>
</dbReference>
<dbReference type="SMR" id="Q05092"/>
<dbReference type="GO" id="GO:0005737">
    <property type="term" value="C:cytoplasm"/>
    <property type="evidence" value="ECO:0007669"/>
    <property type="project" value="UniProtKB-SubCell"/>
</dbReference>
<dbReference type="GO" id="GO:0003700">
    <property type="term" value="F:DNA-binding transcription factor activity"/>
    <property type="evidence" value="ECO:0007669"/>
    <property type="project" value="InterPro"/>
</dbReference>
<dbReference type="GO" id="GO:0043565">
    <property type="term" value="F:sequence-specific DNA binding"/>
    <property type="evidence" value="ECO:0007669"/>
    <property type="project" value="InterPro"/>
</dbReference>
<dbReference type="GO" id="GO:0009056">
    <property type="term" value="P:catabolic process"/>
    <property type="evidence" value="ECO:0007669"/>
    <property type="project" value="UniProtKB-KW"/>
</dbReference>
<dbReference type="GO" id="GO:0009893">
    <property type="term" value="P:positive regulation of metabolic process"/>
    <property type="evidence" value="ECO:0007669"/>
    <property type="project" value="UniProtKB-ARBA"/>
</dbReference>
<dbReference type="Gene3D" id="1.10.10.60">
    <property type="entry name" value="Homeodomain-like"/>
    <property type="match status" value="1"/>
</dbReference>
<dbReference type="InterPro" id="IPR050204">
    <property type="entry name" value="AraC_XylS_family_regulators"/>
</dbReference>
<dbReference type="InterPro" id="IPR009057">
    <property type="entry name" value="Homeodomain-like_sf"/>
</dbReference>
<dbReference type="InterPro" id="IPR018060">
    <property type="entry name" value="HTH_AraC"/>
</dbReference>
<dbReference type="InterPro" id="IPR018062">
    <property type="entry name" value="HTH_AraC-typ_CS"/>
</dbReference>
<dbReference type="PANTHER" id="PTHR46796:SF6">
    <property type="entry name" value="ARAC SUBFAMILY"/>
    <property type="match status" value="1"/>
</dbReference>
<dbReference type="PANTHER" id="PTHR46796">
    <property type="entry name" value="HTH-TYPE TRANSCRIPTIONAL ACTIVATOR RHAS-RELATED"/>
    <property type="match status" value="1"/>
</dbReference>
<dbReference type="Pfam" id="PF12833">
    <property type="entry name" value="HTH_18"/>
    <property type="match status" value="1"/>
</dbReference>
<dbReference type="SMART" id="SM00342">
    <property type="entry name" value="HTH_ARAC"/>
    <property type="match status" value="1"/>
</dbReference>
<dbReference type="SUPFAM" id="SSF46689">
    <property type="entry name" value="Homeodomain-like"/>
    <property type="match status" value="1"/>
</dbReference>
<dbReference type="PROSITE" id="PS00041">
    <property type="entry name" value="HTH_ARAC_FAMILY_1"/>
    <property type="match status" value="1"/>
</dbReference>
<dbReference type="PROSITE" id="PS01124">
    <property type="entry name" value="HTH_ARAC_FAMILY_2"/>
    <property type="match status" value="1"/>
</dbReference>
<accession>Q05092</accession>
<proteinExistence type="predicted"/>
<reference key="1">
    <citation type="journal article" date="1992" name="Nucleic Acids Res.">
        <title>Identical resolvases are encoded by Pseudomonas TOL plasmids pWW53 and pDK1.</title>
        <authorList>
            <person name="Assinder S.J."/>
            <person name="de Marco P."/>
            <person name="Sayers J.R."/>
            <person name="Shaw L.E."/>
            <person name="Winson M.K."/>
            <person name="Williams P.A."/>
        </authorList>
    </citation>
    <scope>NUCLEOTIDE SEQUENCE [GENOMIC DNA]</scope>
    <source>
        <strain>HS1</strain>
        <strain>MT53</strain>
    </source>
</reference>
<gene>
    <name type="primary">xylS2</name>
</gene>
<comment type="function">
    <text>Regulatory protein of the TOL plasmid xyl operons. XylS activates the xylXYZLTEGFJQKIH operon required for the degradation of toluene, m-xylene and p-xylene.</text>
</comment>
<comment type="subcellular location">
    <subcellularLocation>
        <location>Cytoplasm</location>
    </subcellularLocation>
</comment>